<protein>
    <recommendedName>
        <fullName evidence="1">Light-independent protochlorophyllide reductase iron-sulfur ATP-binding protein</fullName>
        <shortName evidence="1">DPOR subunit L</shortName>
        <shortName evidence="1">LI-POR subunit L</shortName>
        <ecNumber evidence="1">1.3.7.7</ecNumber>
    </recommendedName>
</protein>
<gene>
    <name evidence="1" type="primary">chlL</name>
    <name type="ordered locus">Npun_R4422</name>
</gene>
<comment type="function">
    <text evidence="1">Component of the dark-operative protochlorophyllide reductase (DPOR) that uses Mg-ATP and reduced ferredoxin to reduce ring D of protochlorophyllide (Pchlide) to form chlorophyllide a (Chlide). This reaction is light-independent. The L component serves as a unique electron donor to the NB-component of the complex, and binds Mg-ATP.</text>
</comment>
<comment type="catalytic activity">
    <reaction evidence="1">
        <text>chlorophyllide a + oxidized 2[4Fe-4S]-[ferredoxin] + 2 ADP + 2 phosphate = protochlorophyllide a + reduced 2[4Fe-4S]-[ferredoxin] + 2 ATP + 2 H2O</text>
        <dbReference type="Rhea" id="RHEA:28202"/>
        <dbReference type="Rhea" id="RHEA-COMP:10002"/>
        <dbReference type="Rhea" id="RHEA-COMP:10004"/>
        <dbReference type="ChEBI" id="CHEBI:15377"/>
        <dbReference type="ChEBI" id="CHEBI:30616"/>
        <dbReference type="ChEBI" id="CHEBI:33722"/>
        <dbReference type="ChEBI" id="CHEBI:33723"/>
        <dbReference type="ChEBI" id="CHEBI:43474"/>
        <dbReference type="ChEBI" id="CHEBI:83348"/>
        <dbReference type="ChEBI" id="CHEBI:83350"/>
        <dbReference type="ChEBI" id="CHEBI:456216"/>
        <dbReference type="EC" id="1.3.7.7"/>
    </reaction>
</comment>
<comment type="cofactor">
    <cofactor evidence="1">
        <name>[4Fe-4S] cluster</name>
        <dbReference type="ChEBI" id="CHEBI:49883"/>
    </cofactor>
    <text evidence="1">Binds 1 [4Fe-4S] cluster per dimer.</text>
</comment>
<comment type="pathway">
    <text evidence="1">Porphyrin-containing compound metabolism; chlorophyll biosynthesis (light-independent).</text>
</comment>
<comment type="subunit">
    <text evidence="1">Homodimer. Protochlorophyllide reductase is composed of three subunits; ChlL, ChlN and ChlB.</text>
</comment>
<comment type="similarity">
    <text evidence="1">Belongs to the NifH/BchL/ChlL family.</text>
</comment>
<name>CHLL_NOSP7</name>
<proteinExistence type="inferred from homology"/>
<organism>
    <name type="scientific">Nostoc punctiforme (strain ATCC 29133 / PCC 73102)</name>
    <dbReference type="NCBI Taxonomy" id="63737"/>
    <lineage>
        <taxon>Bacteria</taxon>
        <taxon>Bacillati</taxon>
        <taxon>Cyanobacteriota</taxon>
        <taxon>Cyanophyceae</taxon>
        <taxon>Nostocales</taxon>
        <taxon>Nostocaceae</taxon>
        <taxon>Nostoc</taxon>
    </lineage>
</organism>
<evidence type="ECO:0000255" key="1">
    <source>
        <dbReference type="HAMAP-Rule" id="MF_00355"/>
    </source>
</evidence>
<reference key="1">
    <citation type="journal article" date="2013" name="Plant Physiol.">
        <title>A Nostoc punctiforme Sugar Transporter Necessary to Establish a Cyanobacterium-Plant Symbiosis.</title>
        <authorList>
            <person name="Ekman M."/>
            <person name="Picossi S."/>
            <person name="Campbell E.L."/>
            <person name="Meeks J.C."/>
            <person name="Flores E."/>
        </authorList>
    </citation>
    <scope>NUCLEOTIDE SEQUENCE [LARGE SCALE GENOMIC DNA]</scope>
    <source>
        <strain>ATCC 29133 / PCC 73102</strain>
    </source>
</reference>
<sequence length="288" mass="31534">MKLAVYGKGGIGKSTTSCNISVALAKRGKKVLQIGCDPKHDSTFTLTGFLIPTIIDTLQEKDYHYEDVWPEDVIYKGYGGVDCVEAGGPPAGAGCGGYVVGETVKLLKELNAFDEYDVILFDVLGDVVCGGFAAPLNYADYCLIVTDNGFDALFAANRIAASVREKARTHPLRLAGLIGNRTSKRDLIEKYIEAVPMPVLEVLPLIEDIRVSRVKGKTLFEMAEQDPSLDYVCDYYLNIADQILARPEGVVPNDTPDRELFSLLSDFYLNPGKPQVPNSEEELDLMIV</sequence>
<feature type="chain" id="PRO_1000120557" description="Light-independent protochlorophyllide reductase iron-sulfur ATP-binding protein">
    <location>
        <begin position="1"/>
        <end position="288"/>
    </location>
</feature>
<feature type="binding site" evidence="1">
    <location>
        <begin position="10"/>
        <end position="15"/>
    </location>
    <ligand>
        <name>ATP</name>
        <dbReference type="ChEBI" id="CHEBI:30616"/>
    </ligand>
</feature>
<feature type="binding site" evidence="1">
    <location>
        <position position="14"/>
    </location>
    <ligand>
        <name>Mg(2+)</name>
        <dbReference type="ChEBI" id="CHEBI:18420"/>
    </ligand>
</feature>
<feature type="binding site" evidence="1">
    <location>
        <position position="39"/>
    </location>
    <ligand>
        <name>ATP</name>
        <dbReference type="ChEBI" id="CHEBI:30616"/>
    </ligand>
</feature>
<feature type="binding site" evidence="1">
    <location>
        <position position="95"/>
    </location>
    <ligand>
        <name>[4Fe-4S] cluster</name>
        <dbReference type="ChEBI" id="CHEBI:49883"/>
        <note>ligand shared between dimeric partners</note>
    </ligand>
</feature>
<feature type="binding site" evidence="1">
    <location>
        <position position="129"/>
    </location>
    <ligand>
        <name>[4Fe-4S] cluster</name>
        <dbReference type="ChEBI" id="CHEBI:49883"/>
        <note>ligand shared between dimeric partners</note>
    </ligand>
</feature>
<feature type="binding site" evidence="1">
    <location>
        <begin position="180"/>
        <end position="181"/>
    </location>
    <ligand>
        <name>ATP</name>
        <dbReference type="ChEBI" id="CHEBI:30616"/>
    </ligand>
</feature>
<keyword id="KW-0004">4Fe-4S</keyword>
<keyword id="KW-0067">ATP-binding</keyword>
<keyword id="KW-0149">Chlorophyll biosynthesis</keyword>
<keyword id="KW-0408">Iron</keyword>
<keyword id="KW-0411">Iron-sulfur</keyword>
<keyword id="KW-0460">Magnesium</keyword>
<keyword id="KW-0479">Metal-binding</keyword>
<keyword id="KW-0547">Nucleotide-binding</keyword>
<keyword id="KW-0560">Oxidoreductase</keyword>
<keyword id="KW-0602">Photosynthesis</keyword>
<keyword id="KW-1185">Reference proteome</keyword>
<dbReference type="EC" id="1.3.7.7" evidence="1"/>
<dbReference type="EMBL" id="CP001037">
    <property type="protein sequence ID" value="ACC82792.1"/>
    <property type="molecule type" value="Genomic_DNA"/>
</dbReference>
<dbReference type="SMR" id="B2IUL7"/>
<dbReference type="STRING" id="63737.Npun_R4422"/>
<dbReference type="EnsemblBacteria" id="ACC82792">
    <property type="protein sequence ID" value="ACC82792"/>
    <property type="gene ID" value="Npun_R4422"/>
</dbReference>
<dbReference type="KEGG" id="npu:Npun_R4422"/>
<dbReference type="eggNOG" id="COG1348">
    <property type="taxonomic scope" value="Bacteria"/>
</dbReference>
<dbReference type="HOGENOM" id="CLU_059373_2_0_3"/>
<dbReference type="OrthoDB" id="9778641at2"/>
<dbReference type="PhylomeDB" id="B2IUL7"/>
<dbReference type="UniPathway" id="UPA00670"/>
<dbReference type="Proteomes" id="UP000001191">
    <property type="component" value="Chromosome"/>
</dbReference>
<dbReference type="GO" id="GO:0051539">
    <property type="term" value="F:4 iron, 4 sulfur cluster binding"/>
    <property type="evidence" value="ECO:0007669"/>
    <property type="project" value="UniProtKB-UniRule"/>
</dbReference>
<dbReference type="GO" id="GO:0005524">
    <property type="term" value="F:ATP binding"/>
    <property type="evidence" value="ECO:0007669"/>
    <property type="project" value="UniProtKB-UniRule"/>
</dbReference>
<dbReference type="GO" id="GO:0046872">
    <property type="term" value="F:metal ion binding"/>
    <property type="evidence" value="ECO:0007669"/>
    <property type="project" value="UniProtKB-KW"/>
</dbReference>
<dbReference type="GO" id="GO:0016730">
    <property type="term" value="F:oxidoreductase activity, acting on iron-sulfur proteins as donors"/>
    <property type="evidence" value="ECO:0007669"/>
    <property type="project" value="InterPro"/>
</dbReference>
<dbReference type="GO" id="GO:0016636">
    <property type="term" value="F:oxidoreductase activity, acting on the CH-CH group of donors, iron-sulfur protein as acceptor"/>
    <property type="evidence" value="ECO:0007669"/>
    <property type="project" value="UniProtKB-UniRule"/>
</dbReference>
<dbReference type="GO" id="GO:0036068">
    <property type="term" value="P:light-independent chlorophyll biosynthetic process"/>
    <property type="evidence" value="ECO:0007669"/>
    <property type="project" value="UniProtKB-UniRule"/>
</dbReference>
<dbReference type="GO" id="GO:0019685">
    <property type="term" value="P:photosynthesis, dark reaction"/>
    <property type="evidence" value="ECO:0007669"/>
    <property type="project" value="InterPro"/>
</dbReference>
<dbReference type="CDD" id="cd02032">
    <property type="entry name" value="Bchl-like"/>
    <property type="match status" value="1"/>
</dbReference>
<dbReference type="Gene3D" id="3.40.50.300">
    <property type="entry name" value="P-loop containing nucleotide triphosphate hydrolases"/>
    <property type="match status" value="1"/>
</dbReference>
<dbReference type="HAMAP" id="MF_00355">
    <property type="entry name" value="ChlL_BchL"/>
    <property type="match status" value="1"/>
</dbReference>
<dbReference type="InterPro" id="IPR030655">
    <property type="entry name" value="NifH/chlL_CS"/>
</dbReference>
<dbReference type="InterPro" id="IPR000392">
    <property type="entry name" value="NifH/frxC"/>
</dbReference>
<dbReference type="InterPro" id="IPR027417">
    <property type="entry name" value="P-loop_NTPase"/>
</dbReference>
<dbReference type="InterPro" id="IPR005971">
    <property type="entry name" value="Protochlorophyllide_ATP-bd"/>
</dbReference>
<dbReference type="NCBIfam" id="TIGR01281">
    <property type="entry name" value="DPOR_bchL"/>
    <property type="match status" value="1"/>
</dbReference>
<dbReference type="PANTHER" id="PTHR42864">
    <property type="entry name" value="LIGHT-INDEPENDENT PROTOCHLOROPHYLLIDE REDUCTASE IRON-SULFUR ATP-BINDING PROTEIN"/>
    <property type="match status" value="1"/>
</dbReference>
<dbReference type="PANTHER" id="PTHR42864:SF2">
    <property type="entry name" value="LIGHT-INDEPENDENT PROTOCHLOROPHYLLIDE REDUCTASE IRON-SULFUR ATP-BINDING PROTEIN"/>
    <property type="match status" value="1"/>
</dbReference>
<dbReference type="Pfam" id="PF00142">
    <property type="entry name" value="Fer4_NifH"/>
    <property type="match status" value="1"/>
</dbReference>
<dbReference type="PIRSF" id="PIRSF000363">
    <property type="entry name" value="Nitrogenase_iron"/>
    <property type="match status" value="1"/>
</dbReference>
<dbReference type="PRINTS" id="PR00091">
    <property type="entry name" value="NITROGNASEII"/>
</dbReference>
<dbReference type="SUPFAM" id="SSF52540">
    <property type="entry name" value="P-loop containing nucleoside triphosphate hydrolases"/>
    <property type="match status" value="1"/>
</dbReference>
<dbReference type="PROSITE" id="PS00746">
    <property type="entry name" value="NIFH_FRXC_1"/>
    <property type="match status" value="1"/>
</dbReference>
<dbReference type="PROSITE" id="PS00692">
    <property type="entry name" value="NIFH_FRXC_2"/>
    <property type="match status" value="1"/>
</dbReference>
<dbReference type="PROSITE" id="PS51026">
    <property type="entry name" value="NIFH_FRXC_3"/>
    <property type="match status" value="1"/>
</dbReference>
<accession>B2IUL7</accession>